<reference key="1">
    <citation type="journal article" date="2008" name="BMC Genomics">
        <title>The genome sequence of the fish pathogen Aliivibrio salmonicida strain LFI1238 shows extensive evidence of gene decay.</title>
        <authorList>
            <person name="Hjerde E."/>
            <person name="Lorentzen M.S."/>
            <person name="Holden M.T."/>
            <person name="Seeger K."/>
            <person name="Paulsen S."/>
            <person name="Bason N."/>
            <person name="Churcher C."/>
            <person name="Harris D."/>
            <person name="Norbertczak H."/>
            <person name="Quail M.A."/>
            <person name="Sanders S."/>
            <person name="Thurston S."/>
            <person name="Parkhill J."/>
            <person name="Willassen N.P."/>
            <person name="Thomson N.R."/>
        </authorList>
    </citation>
    <scope>NUCLEOTIDE SEQUENCE [LARGE SCALE GENOMIC DNA]</scope>
    <source>
        <strain>LFI1238</strain>
    </source>
</reference>
<accession>B6EPS6</accession>
<feature type="chain" id="PRO_1000142070" description="Large ribosomal subunit protein uL4">
    <location>
        <begin position="1"/>
        <end position="200"/>
    </location>
</feature>
<feature type="region of interest" description="Disordered" evidence="2">
    <location>
        <begin position="43"/>
        <end position="65"/>
    </location>
</feature>
<proteinExistence type="inferred from homology"/>
<protein>
    <recommendedName>
        <fullName evidence="1">Large ribosomal subunit protein uL4</fullName>
    </recommendedName>
    <alternativeName>
        <fullName evidence="3">50S ribosomal protein L4</fullName>
    </alternativeName>
</protein>
<dbReference type="EMBL" id="FM178379">
    <property type="protein sequence ID" value="CAQ78006.1"/>
    <property type="molecule type" value="Genomic_DNA"/>
</dbReference>
<dbReference type="RefSeq" id="WP_012549151.1">
    <property type="nucleotide sequence ID" value="NC_011312.1"/>
</dbReference>
<dbReference type="SMR" id="B6EPS6"/>
<dbReference type="KEGG" id="vsa:VSAL_I0321"/>
<dbReference type="eggNOG" id="COG0088">
    <property type="taxonomic scope" value="Bacteria"/>
</dbReference>
<dbReference type="HOGENOM" id="CLU_041575_5_2_6"/>
<dbReference type="Proteomes" id="UP000001730">
    <property type="component" value="Chromosome 1"/>
</dbReference>
<dbReference type="GO" id="GO:1990904">
    <property type="term" value="C:ribonucleoprotein complex"/>
    <property type="evidence" value="ECO:0007669"/>
    <property type="project" value="UniProtKB-KW"/>
</dbReference>
<dbReference type="GO" id="GO:0005840">
    <property type="term" value="C:ribosome"/>
    <property type="evidence" value="ECO:0007669"/>
    <property type="project" value="UniProtKB-KW"/>
</dbReference>
<dbReference type="GO" id="GO:0019843">
    <property type="term" value="F:rRNA binding"/>
    <property type="evidence" value="ECO:0007669"/>
    <property type="project" value="UniProtKB-UniRule"/>
</dbReference>
<dbReference type="GO" id="GO:0003735">
    <property type="term" value="F:structural constituent of ribosome"/>
    <property type="evidence" value="ECO:0007669"/>
    <property type="project" value="InterPro"/>
</dbReference>
<dbReference type="GO" id="GO:0006412">
    <property type="term" value="P:translation"/>
    <property type="evidence" value="ECO:0007669"/>
    <property type="project" value="UniProtKB-UniRule"/>
</dbReference>
<dbReference type="FunFam" id="3.40.1370.10:FF:000001">
    <property type="entry name" value="50S ribosomal protein L4"/>
    <property type="match status" value="1"/>
</dbReference>
<dbReference type="Gene3D" id="3.40.1370.10">
    <property type="match status" value="1"/>
</dbReference>
<dbReference type="HAMAP" id="MF_01328_B">
    <property type="entry name" value="Ribosomal_uL4_B"/>
    <property type="match status" value="1"/>
</dbReference>
<dbReference type="InterPro" id="IPR002136">
    <property type="entry name" value="Ribosomal_uL4"/>
</dbReference>
<dbReference type="InterPro" id="IPR013005">
    <property type="entry name" value="Ribosomal_uL4-like"/>
</dbReference>
<dbReference type="InterPro" id="IPR023574">
    <property type="entry name" value="Ribosomal_uL4_dom_sf"/>
</dbReference>
<dbReference type="NCBIfam" id="TIGR03953">
    <property type="entry name" value="rplD_bact"/>
    <property type="match status" value="1"/>
</dbReference>
<dbReference type="PANTHER" id="PTHR10746">
    <property type="entry name" value="50S RIBOSOMAL PROTEIN L4"/>
    <property type="match status" value="1"/>
</dbReference>
<dbReference type="PANTHER" id="PTHR10746:SF6">
    <property type="entry name" value="LARGE RIBOSOMAL SUBUNIT PROTEIN UL4M"/>
    <property type="match status" value="1"/>
</dbReference>
<dbReference type="Pfam" id="PF00573">
    <property type="entry name" value="Ribosomal_L4"/>
    <property type="match status" value="1"/>
</dbReference>
<dbReference type="SUPFAM" id="SSF52166">
    <property type="entry name" value="Ribosomal protein L4"/>
    <property type="match status" value="1"/>
</dbReference>
<organism>
    <name type="scientific">Aliivibrio salmonicida (strain LFI1238)</name>
    <name type="common">Vibrio salmonicida (strain LFI1238)</name>
    <dbReference type="NCBI Taxonomy" id="316275"/>
    <lineage>
        <taxon>Bacteria</taxon>
        <taxon>Pseudomonadati</taxon>
        <taxon>Pseudomonadota</taxon>
        <taxon>Gammaproteobacteria</taxon>
        <taxon>Vibrionales</taxon>
        <taxon>Vibrionaceae</taxon>
        <taxon>Aliivibrio</taxon>
    </lineage>
</organism>
<name>RL4_ALISL</name>
<keyword id="KW-0687">Ribonucleoprotein</keyword>
<keyword id="KW-0689">Ribosomal protein</keyword>
<keyword id="KW-0694">RNA-binding</keyword>
<keyword id="KW-0699">rRNA-binding</keyword>
<evidence type="ECO:0000255" key="1">
    <source>
        <dbReference type="HAMAP-Rule" id="MF_01328"/>
    </source>
</evidence>
<evidence type="ECO:0000256" key="2">
    <source>
        <dbReference type="SAM" id="MobiDB-lite"/>
    </source>
</evidence>
<evidence type="ECO:0000305" key="3"/>
<gene>
    <name evidence="1" type="primary">rplD</name>
    <name type="ordered locus">VSAL_I0321</name>
</gene>
<sequence>MELMVKGAAALTVSETTFGREFNEALVHQVVVAYAAGARQGTRAQKTRSEVSGGGAKPWRQKGTGRARAGTIRSPIWRSGGVTFAAKPQDHSLKVNKKMYRGALKSILSELVRQDRLIVVEDFSIEAPKTKELVAKLKELELNDVLIVTGEVDENLFLAARNLYKVDARDVAGIDPVSLVAFNKVLMTAAAVKQVEEMLA</sequence>
<comment type="function">
    <text evidence="1">One of the primary rRNA binding proteins, this protein initially binds near the 5'-end of the 23S rRNA. It is important during the early stages of 50S assembly. It makes multiple contacts with different domains of the 23S rRNA in the assembled 50S subunit and ribosome.</text>
</comment>
<comment type="function">
    <text evidence="1">Forms part of the polypeptide exit tunnel.</text>
</comment>
<comment type="subunit">
    <text evidence="1">Part of the 50S ribosomal subunit.</text>
</comment>
<comment type="similarity">
    <text evidence="1">Belongs to the universal ribosomal protein uL4 family.</text>
</comment>